<organism>
    <name type="scientific">Xanthomonas oryzae pv. oryzae (strain MAFF 311018)</name>
    <dbReference type="NCBI Taxonomy" id="342109"/>
    <lineage>
        <taxon>Bacteria</taxon>
        <taxon>Pseudomonadati</taxon>
        <taxon>Pseudomonadota</taxon>
        <taxon>Gammaproteobacteria</taxon>
        <taxon>Lysobacterales</taxon>
        <taxon>Lysobacteraceae</taxon>
        <taxon>Xanthomonas</taxon>
    </lineage>
</organism>
<gene>
    <name evidence="1" type="primary">miaA</name>
    <name type="ordered locus">XOO2799</name>
</gene>
<proteinExistence type="inferred from homology"/>
<evidence type="ECO:0000255" key="1">
    <source>
        <dbReference type="HAMAP-Rule" id="MF_00185"/>
    </source>
</evidence>
<dbReference type="EC" id="2.5.1.75" evidence="1"/>
<dbReference type="EMBL" id="AP008229">
    <property type="protein sequence ID" value="BAE69554.1"/>
    <property type="molecule type" value="Genomic_DNA"/>
</dbReference>
<dbReference type="RefSeq" id="WP_011408887.1">
    <property type="nucleotide sequence ID" value="NC_007705.1"/>
</dbReference>
<dbReference type="SMR" id="Q2P1M3"/>
<dbReference type="KEGG" id="xom:XOO2799"/>
<dbReference type="HOGENOM" id="CLU_032616_0_0_6"/>
<dbReference type="GO" id="GO:0005524">
    <property type="term" value="F:ATP binding"/>
    <property type="evidence" value="ECO:0007669"/>
    <property type="project" value="UniProtKB-UniRule"/>
</dbReference>
<dbReference type="GO" id="GO:0052381">
    <property type="term" value="F:tRNA dimethylallyltransferase activity"/>
    <property type="evidence" value="ECO:0007669"/>
    <property type="project" value="UniProtKB-UniRule"/>
</dbReference>
<dbReference type="GO" id="GO:0006400">
    <property type="term" value="P:tRNA modification"/>
    <property type="evidence" value="ECO:0007669"/>
    <property type="project" value="TreeGrafter"/>
</dbReference>
<dbReference type="CDD" id="cd02019">
    <property type="entry name" value="NK"/>
    <property type="match status" value="1"/>
</dbReference>
<dbReference type="FunFam" id="1.10.20.140:FF:000001">
    <property type="entry name" value="tRNA dimethylallyltransferase"/>
    <property type="match status" value="1"/>
</dbReference>
<dbReference type="Gene3D" id="1.10.20.140">
    <property type="match status" value="1"/>
</dbReference>
<dbReference type="Gene3D" id="3.40.50.300">
    <property type="entry name" value="P-loop containing nucleotide triphosphate hydrolases"/>
    <property type="match status" value="1"/>
</dbReference>
<dbReference type="HAMAP" id="MF_00185">
    <property type="entry name" value="IPP_trans"/>
    <property type="match status" value="1"/>
</dbReference>
<dbReference type="InterPro" id="IPR039657">
    <property type="entry name" value="Dimethylallyltransferase"/>
</dbReference>
<dbReference type="InterPro" id="IPR018022">
    <property type="entry name" value="IPT"/>
</dbReference>
<dbReference type="InterPro" id="IPR027417">
    <property type="entry name" value="P-loop_NTPase"/>
</dbReference>
<dbReference type="NCBIfam" id="TIGR00174">
    <property type="entry name" value="miaA"/>
    <property type="match status" value="1"/>
</dbReference>
<dbReference type="PANTHER" id="PTHR11088">
    <property type="entry name" value="TRNA DIMETHYLALLYLTRANSFERASE"/>
    <property type="match status" value="1"/>
</dbReference>
<dbReference type="PANTHER" id="PTHR11088:SF60">
    <property type="entry name" value="TRNA DIMETHYLALLYLTRANSFERASE"/>
    <property type="match status" value="1"/>
</dbReference>
<dbReference type="Pfam" id="PF01715">
    <property type="entry name" value="IPPT"/>
    <property type="match status" value="1"/>
</dbReference>
<dbReference type="SUPFAM" id="SSF52540">
    <property type="entry name" value="P-loop containing nucleoside triphosphate hydrolases"/>
    <property type="match status" value="1"/>
</dbReference>
<accession>Q2P1M3</accession>
<reference key="1">
    <citation type="journal article" date="2005" name="Jpn. Agric. Res. Q.">
        <title>Genome sequence of Xanthomonas oryzae pv. oryzae suggests contribution of large numbers of effector genes and insertion sequences to its race diversity.</title>
        <authorList>
            <person name="Ochiai H."/>
            <person name="Inoue Y."/>
            <person name="Takeya M."/>
            <person name="Sasaki A."/>
            <person name="Kaku H."/>
        </authorList>
    </citation>
    <scope>NUCLEOTIDE SEQUENCE [LARGE SCALE GENOMIC DNA]</scope>
    <source>
        <strain>MAFF 311018</strain>
    </source>
</reference>
<keyword id="KW-0067">ATP-binding</keyword>
<keyword id="KW-0460">Magnesium</keyword>
<keyword id="KW-0547">Nucleotide-binding</keyword>
<keyword id="KW-0808">Transferase</keyword>
<keyword id="KW-0819">tRNA processing</keyword>
<feature type="chain" id="PRO_1000020686" description="tRNA dimethylallyltransferase">
    <location>
        <begin position="1"/>
        <end position="327"/>
    </location>
</feature>
<feature type="region of interest" description="Interaction with substrate tRNA" evidence="1">
    <location>
        <begin position="39"/>
        <end position="42"/>
    </location>
</feature>
<feature type="region of interest" description="Interaction with substrate tRNA" evidence="1">
    <location>
        <begin position="163"/>
        <end position="167"/>
    </location>
</feature>
<feature type="binding site" evidence="1">
    <location>
        <begin position="14"/>
        <end position="21"/>
    </location>
    <ligand>
        <name>ATP</name>
        <dbReference type="ChEBI" id="CHEBI:30616"/>
    </ligand>
</feature>
<feature type="binding site" evidence="1">
    <location>
        <begin position="16"/>
        <end position="21"/>
    </location>
    <ligand>
        <name>substrate</name>
    </ligand>
</feature>
<feature type="site" description="Interaction with substrate tRNA" evidence="1">
    <location>
        <position position="105"/>
    </location>
</feature>
<feature type="site" description="Interaction with substrate tRNA" evidence="1">
    <location>
        <position position="127"/>
    </location>
</feature>
<protein>
    <recommendedName>
        <fullName evidence="1">tRNA dimethylallyltransferase</fullName>
        <ecNumber evidence="1">2.5.1.75</ecNumber>
    </recommendedName>
    <alternativeName>
        <fullName evidence="1">Dimethylallyl diphosphate:tRNA dimethylallyltransferase</fullName>
        <shortName evidence="1">DMAPP:tRNA dimethylallyltransferase</shortName>
        <shortName evidence="1">DMATase</shortName>
    </alternativeName>
    <alternativeName>
        <fullName evidence="1">Isopentenyl-diphosphate:tRNA isopentenyltransferase</fullName>
        <shortName evidence="1">IPP transferase</shortName>
        <shortName evidence="1">IPPT</shortName>
        <shortName evidence="1">IPTase</shortName>
    </alternativeName>
</protein>
<name>MIAA_XANOM</name>
<comment type="function">
    <text evidence="1">Catalyzes the transfer of a dimethylallyl group onto the adenine at position 37 in tRNAs that read codons beginning with uridine, leading to the formation of N6-(dimethylallyl)adenosine (i(6)A).</text>
</comment>
<comment type="catalytic activity">
    <reaction evidence="1">
        <text>adenosine(37) in tRNA + dimethylallyl diphosphate = N(6)-dimethylallyladenosine(37) in tRNA + diphosphate</text>
        <dbReference type="Rhea" id="RHEA:26482"/>
        <dbReference type="Rhea" id="RHEA-COMP:10162"/>
        <dbReference type="Rhea" id="RHEA-COMP:10375"/>
        <dbReference type="ChEBI" id="CHEBI:33019"/>
        <dbReference type="ChEBI" id="CHEBI:57623"/>
        <dbReference type="ChEBI" id="CHEBI:74411"/>
        <dbReference type="ChEBI" id="CHEBI:74415"/>
        <dbReference type="EC" id="2.5.1.75"/>
    </reaction>
</comment>
<comment type="cofactor">
    <cofactor evidence="1">
        <name>Mg(2+)</name>
        <dbReference type="ChEBI" id="CHEBI:18420"/>
    </cofactor>
</comment>
<comment type="subunit">
    <text evidence="1">Monomer.</text>
</comment>
<comment type="similarity">
    <text evidence="1">Belongs to the IPP transferase family.</text>
</comment>
<sequence>MPADQRPLAIALMGPTASGKTALALEAAERWNGEIVSVDSALVYRGLEIGAAKPDAAMRAAVPHHLLDLRDPWQVYSAAEFAGDARQAIAQIVARGKLPILAGGTGLYFRALLEGLSHLPEADRAARASIAAEAEQIGWAGLHSELARVDPVAAARIHATDPQRIQRALEVYRISGRPISYWQALPPGLRLPVRVLKVVLAPRERAVLHGRIERRLDAMLAQGFLAEVEQVRALPQMRAVAVPLDLPAVRAVGYRQAWEYLDGAGSLAEFRDKAIQATRQLAKRQLTWLRGELDARWFDPELDRHQLERALVGFLGDRSAVRQASGV</sequence>